<sequence length="323" mass="36343">MADAPTRATTSRVDSDLDAQSPAADLVRVYLNGIGKTALLNAAGEVELAKRIEAGLYAEHLLETRKRLGENRKRDLAAVVRDGEAARRHLLEANLRLVVSLAKRYTGRGMPLLDLIQEGNLGLIRAMEKFDYTKGFKFSTYATWWIRQAITRGMADQSRTIRLPVHLVEQVNKLARIKREMHQHLGREATDEELAAESGIPIDKINDLLEHSRDPVSLDMPVGSEEEAPLGDFIEDAEAMSAENAVIAELLHTDIRSVLATLDEREHQVIRLRFGLDDGQPRTLDQIGKLFGLSRERVRQIERDVMSKLRHGERADRLRSYAS</sequence>
<protein>
    <recommendedName>
        <fullName>RNA polymerase sigma factor SigB</fullName>
    </recommendedName>
</protein>
<name>SIGB_MYCTU</name>
<accession>P9WGI5</accession>
<accession>O08496</accession>
<accession>O08514</accession>
<accession>Q59563</accession>
<accession>Q79FB5</accession>
<accession>Q7D6Q4</accession>
<reference key="1">
    <citation type="journal article" date="1995" name="Gene">
        <title>Genomic organization of the mycobacterial sigma gene cluster.</title>
        <authorList>
            <person name="Doukhan L."/>
            <person name="Predich M."/>
            <person name="Nair G."/>
            <person name="Dussurget O."/>
            <person name="Mandic-Mulec I."/>
            <person name="Cole S.T."/>
            <person name="Smith D.R."/>
            <person name="Smith I."/>
        </authorList>
    </citation>
    <scope>NUCLEOTIDE SEQUENCE [GENOMIC DNA]</scope>
    <source>
        <strain>ATCC 25618 / H37Rv</strain>
    </source>
</reference>
<reference key="2">
    <citation type="journal article" date="1998" name="Nature">
        <title>Deciphering the biology of Mycobacterium tuberculosis from the complete genome sequence.</title>
        <authorList>
            <person name="Cole S.T."/>
            <person name="Brosch R."/>
            <person name="Parkhill J."/>
            <person name="Garnier T."/>
            <person name="Churcher C.M."/>
            <person name="Harris D.E."/>
            <person name="Gordon S.V."/>
            <person name="Eiglmeier K."/>
            <person name="Gas S."/>
            <person name="Barry C.E. III"/>
            <person name="Tekaia F."/>
            <person name="Badcock K."/>
            <person name="Basham D."/>
            <person name="Brown D."/>
            <person name="Chillingworth T."/>
            <person name="Connor R."/>
            <person name="Davies R.M."/>
            <person name="Devlin K."/>
            <person name="Feltwell T."/>
            <person name="Gentles S."/>
            <person name="Hamlin N."/>
            <person name="Holroyd S."/>
            <person name="Hornsby T."/>
            <person name="Jagels K."/>
            <person name="Krogh A."/>
            <person name="McLean J."/>
            <person name="Moule S."/>
            <person name="Murphy L.D."/>
            <person name="Oliver S."/>
            <person name="Osborne J."/>
            <person name="Quail M.A."/>
            <person name="Rajandream M.A."/>
            <person name="Rogers J."/>
            <person name="Rutter S."/>
            <person name="Seeger K."/>
            <person name="Skelton S."/>
            <person name="Squares S."/>
            <person name="Squares R."/>
            <person name="Sulston J.E."/>
            <person name="Taylor K."/>
            <person name="Whitehead S."/>
            <person name="Barrell B.G."/>
        </authorList>
    </citation>
    <scope>NUCLEOTIDE SEQUENCE [LARGE SCALE GENOMIC DNA]</scope>
    <source>
        <strain>ATCC 25618 / H37Rv</strain>
    </source>
</reference>
<reference key="3">
    <citation type="journal article" date="1999" name="J. Bacteriol.">
        <title>Transcription of two sigma 70 homologue genes, sigA and sigB, in stationary-phase Mycobacterium tuberculosis.</title>
        <authorList>
            <person name="Hu Y."/>
            <person name="Coates A.R."/>
        </authorList>
    </citation>
    <scope>INDUCTION IN STATIONARY PHASE AND BY H(2)O(2)</scope>
    <scope>HALF-LIFE</scope>
    <source>
        <strain>ATCC 25618 / H37Rv</strain>
    </source>
</reference>
<reference key="4">
    <citation type="journal article" date="1999" name="Mol. Microbiol.">
        <title>Differential expression of 10 sigma factor genes in Mycobacterium tuberculosis.</title>
        <authorList>
            <person name="Manganelli R."/>
            <person name="Dubnau E."/>
            <person name="Tyagi S."/>
            <person name="Kramer F.R."/>
            <person name="Smith I."/>
        </authorList>
    </citation>
    <scope>INDUCTION BY STRESSES</scope>
    <source>
        <strain>ATCC 25618 / H37Rv</strain>
    </source>
</reference>
<reference key="5">
    <citation type="journal article" date="2001" name="J. Bacteriol.">
        <title>The alternative sigma factor SigH regulates major components of oxidative and heat stress responses in Mycobacterium tuberculosis.</title>
        <authorList>
            <person name="Raman S."/>
            <person name="Song T."/>
            <person name="Puyang X."/>
            <person name="Bardarov S."/>
            <person name="Jacobs W.R. Jr."/>
            <person name="Husson R.N."/>
        </authorList>
    </citation>
    <scope>INDUCTION BY SIGE AND SIGH</scope>
    <source>
        <strain>ATCC 25618 / H37Rv</strain>
    </source>
</reference>
<reference key="6">
    <citation type="journal article" date="2001" name="Mol. Microbiol.">
        <title>The Mycobacterium tuberculosis ECF sigma factor sigmaE: role in global gene expression and survival in macrophages.</title>
        <authorList>
            <person name="Manganelli R."/>
            <person name="Voskuil M.I."/>
            <person name="Schoolnik G.K."/>
            <person name="Smith I."/>
        </authorList>
    </citation>
    <scope>INDUCTION BY SIGE</scope>
    <source>
        <strain>ATCC 25618 / H37Rv</strain>
    </source>
</reference>
<reference key="7">
    <citation type="journal article" date="2002" name="Mol. Microbiol.">
        <title>Role of the extracytoplasmic-function sigma factor sigma(H) in Mycobacterium tuberculosis global gene expression.</title>
        <authorList>
            <person name="Manganelli R."/>
            <person name="Voskuil M.I."/>
            <person name="Schoolnik G.K."/>
            <person name="Dubnau E."/>
            <person name="Gomez M."/>
            <person name="Smith I."/>
        </authorList>
    </citation>
    <scope>INDUCTION</scope>
    <source>
        <strain>ATCC 25618 / H37Rv</strain>
    </source>
</reference>
<reference key="8">
    <citation type="journal article" date="2002" name="Mol. Microbiol.">
        <title>Evaluation of a nutrient starvation model of Mycobacterium tuberculosis persistence by gene and protein expression profiling.</title>
        <authorList>
            <person name="Betts J.C."/>
            <person name="Lukey P.T."/>
            <person name="Robb L.C."/>
            <person name="McAdam R.A."/>
            <person name="Duncan K."/>
        </authorList>
    </citation>
    <scope>INDUCTION FOLLOWING STARVATION</scope>
    <source>
        <strain>ATCC 25618 / H37Rv / NCTC 7416</strain>
    </source>
</reference>
<reference key="9">
    <citation type="journal article" date="2006" name="J. Bacteriol.">
        <title>MprAB is a stress-responsive two-component system that directly regulates expression of sigma factors SigB and SigE in Mycobacterium tuberculosis.</title>
        <authorList>
            <person name="He H."/>
            <person name="Hovey R."/>
            <person name="Kane J."/>
            <person name="Singh V."/>
            <person name="Zahrt T.C."/>
        </authorList>
    </citation>
    <scope>REGULATION BY MPRAB</scope>
    <source>
        <strain>ATCC 25618 / H37Rv</strain>
    </source>
</reference>
<reference key="10">
    <citation type="journal article" date="2007" name="Microbiology">
        <title>Evidence for complex interactions of stress-associated regulons in an mprAB deletion mutant of Mycobacterium tuberculosis.</title>
        <authorList>
            <person name="Pang X."/>
            <person name="Vu P."/>
            <person name="Byrd T.F."/>
            <person name="Ghanny S."/>
            <person name="Soteropoulos P."/>
            <person name="Mukamolova G.V."/>
            <person name="Wu S."/>
            <person name="Samten B."/>
            <person name="Howard S.T."/>
        </authorList>
    </citation>
    <scope>REGULATION BY MPRAB</scope>
    <source>
        <strain>ATCC 25618 / H37Rv</strain>
    </source>
</reference>
<reference key="11">
    <citation type="journal article" date="2009" name="J. Bacteriol.">
        <title>The Mycobacterium tuberculosis sigma factor sigmaB is required for full response to cell envelope stress and hypoxia in vitro, but it is dispensable for in vivo growth.</title>
        <authorList>
            <person name="Fontan P.A."/>
            <person name="Voskuil M.I."/>
            <person name="Gomez M."/>
            <person name="Tan D."/>
            <person name="Pardini M."/>
            <person name="Manganelli R."/>
            <person name="Fattorini L."/>
            <person name="Schoolnik G.K."/>
            <person name="Smith I."/>
        </authorList>
    </citation>
    <scope>FUNCTION</scope>
    <scope>REGULON</scope>
    <scope>DISRUPTION PHENOTYPE</scope>
    <source>
        <strain>ATCC 25618 / H37Rv</strain>
    </source>
</reference>
<reference key="12">
    <citation type="journal article" date="2011" name="Mol. Cell. Proteomics">
        <title>Proteogenomic analysis of Mycobacterium tuberculosis by high resolution mass spectrometry.</title>
        <authorList>
            <person name="Kelkar D.S."/>
            <person name="Kumar D."/>
            <person name="Kumar P."/>
            <person name="Balakrishnan L."/>
            <person name="Muthusamy B."/>
            <person name="Yadav A.K."/>
            <person name="Shrivastava P."/>
            <person name="Marimuthu A."/>
            <person name="Anand S."/>
            <person name="Sundaram H."/>
            <person name="Kingsbury R."/>
            <person name="Harsha H.C."/>
            <person name="Nair B."/>
            <person name="Prasad T.S."/>
            <person name="Chauhan D.S."/>
            <person name="Katoch K."/>
            <person name="Katoch V.M."/>
            <person name="Kumar P."/>
            <person name="Chaerkady R."/>
            <person name="Ramachandran S."/>
            <person name="Dash D."/>
            <person name="Pandey A."/>
        </authorList>
    </citation>
    <scope>IDENTIFICATION BY MASS SPECTROMETRY [LARGE SCALE ANALYSIS]</scope>
    <source>
        <strain>ATCC 25618 / H37Rv</strain>
    </source>
</reference>
<reference key="13">
    <citation type="journal article" date="2013" name="Nucleic Acids Res.">
        <title>The actinobacterial transcription factor RbpA binds to the principal sigma subunit of RNA polymerase.</title>
        <authorList>
            <person name="Tabib-Salazar A."/>
            <person name="Liu B."/>
            <person name="Doughty P."/>
            <person name="Lewis R.A."/>
            <person name="Ghosh S."/>
            <person name="Parsy M.L."/>
            <person name="Simpson P.J."/>
            <person name="O'Dwyer K."/>
            <person name="Matthews S.J."/>
            <person name="Paget M.S."/>
        </authorList>
    </citation>
    <scope>SUBUNIT</scope>
</reference>
<reference key="14">
    <citation type="journal article" date="2013" name="J. Biol. Chem.">
        <title>Mycobacterium tuberculosis RNA polymerase-binding protein A (RbpA) and its interactions with sigma factors.</title>
        <authorList>
            <person name="Bortoluzzi A."/>
            <person name="Muskett F.W."/>
            <person name="Waters L.C."/>
            <person name="Addis P.W."/>
            <person name="Rieck B."/>
            <person name="Munder T."/>
            <person name="Schleier S."/>
            <person name="Forti F."/>
            <person name="Ghisotti D."/>
            <person name="Carr M.D."/>
            <person name="O'Hare H.M."/>
        </authorList>
    </citation>
    <scope>SUBUNIT</scope>
    <scope>INTERACTION WITH RBPA</scope>
    <source>
        <strain>ATCC 25618 / H37Rv</strain>
    </source>
</reference>
<dbReference type="EMBL" id="U10059">
    <property type="protein sequence ID" value="AAA86044.1"/>
    <property type="molecule type" value="Genomic_DNA"/>
</dbReference>
<dbReference type="EMBL" id="AL123456">
    <property type="protein sequence ID" value="CCP45508.1"/>
    <property type="molecule type" value="Genomic_DNA"/>
</dbReference>
<dbReference type="PIR" id="JC5011">
    <property type="entry name" value="JC5011"/>
</dbReference>
<dbReference type="RefSeq" id="NP_217226.1">
    <property type="nucleotide sequence ID" value="NC_000962.3"/>
</dbReference>
<dbReference type="RefSeq" id="WP_003413958.1">
    <property type="nucleotide sequence ID" value="NZ_NVQJ01000017.1"/>
</dbReference>
<dbReference type="PDB" id="7PP4">
    <property type="method" value="EM"/>
    <property type="resolution" value="3.84 A"/>
    <property type="chains" value="f=1-323"/>
</dbReference>
<dbReference type="PDB" id="7Q4U">
    <property type="method" value="EM"/>
    <property type="resolution" value="4.39 A"/>
    <property type="chains" value="EA/F/KA/L/QA/R/WA/Y=1-323"/>
</dbReference>
<dbReference type="PDB" id="7Q59">
    <property type="method" value="EM"/>
    <property type="resolution" value="4.36 A"/>
    <property type="chains" value="F/f=1-323"/>
</dbReference>
<dbReference type="PDB" id="7ZF2">
    <property type="method" value="EM"/>
    <property type="resolution" value="3.86 A"/>
    <property type="chains" value="F=1-323"/>
</dbReference>
<dbReference type="PDBsum" id="7PP4"/>
<dbReference type="PDBsum" id="7Q4U"/>
<dbReference type="PDBsum" id="7Q59"/>
<dbReference type="PDBsum" id="7ZF2"/>
<dbReference type="EMDB" id="EMD-13579"/>
<dbReference type="EMDB" id="EMD-13817"/>
<dbReference type="EMDB" id="EMD-13829"/>
<dbReference type="EMDB" id="EMD-14974"/>
<dbReference type="SMR" id="P9WGI5"/>
<dbReference type="FunCoup" id="P9WGI5">
    <property type="interactions" value="138"/>
</dbReference>
<dbReference type="STRING" id="83332.Rv2710"/>
<dbReference type="BindingDB" id="P9WGI5"/>
<dbReference type="PaxDb" id="83332-Rv2710"/>
<dbReference type="DNASU" id="888580"/>
<dbReference type="GeneID" id="45426697"/>
<dbReference type="GeneID" id="888580"/>
<dbReference type="KEGG" id="mtu:Rv2710"/>
<dbReference type="KEGG" id="mtv:RVBD_2710"/>
<dbReference type="TubercuList" id="Rv2710"/>
<dbReference type="eggNOG" id="COG0568">
    <property type="taxonomic scope" value="Bacteria"/>
</dbReference>
<dbReference type="InParanoid" id="P9WGI5"/>
<dbReference type="OrthoDB" id="9809557at2"/>
<dbReference type="PhylomeDB" id="P9WGI5"/>
<dbReference type="Proteomes" id="UP000001584">
    <property type="component" value="Chromosome"/>
</dbReference>
<dbReference type="GO" id="GO:0005829">
    <property type="term" value="C:cytosol"/>
    <property type="evidence" value="ECO:0007005"/>
    <property type="project" value="MTBBASE"/>
</dbReference>
<dbReference type="GO" id="GO:0005886">
    <property type="term" value="C:plasma membrane"/>
    <property type="evidence" value="ECO:0007005"/>
    <property type="project" value="MTBBASE"/>
</dbReference>
<dbReference type="GO" id="GO:0003677">
    <property type="term" value="F:DNA binding"/>
    <property type="evidence" value="ECO:0007669"/>
    <property type="project" value="UniProtKB-KW"/>
</dbReference>
<dbReference type="GO" id="GO:0043175">
    <property type="term" value="F:RNA polymerase core enzyme binding"/>
    <property type="evidence" value="ECO:0000314"/>
    <property type="project" value="MTBBASE"/>
</dbReference>
<dbReference type="GO" id="GO:0016987">
    <property type="term" value="F:sigma factor activity"/>
    <property type="evidence" value="ECO:0000316"/>
    <property type="project" value="MTBBASE"/>
</dbReference>
<dbReference type="GO" id="GO:0006352">
    <property type="term" value="P:DNA-templated transcription initiation"/>
    <property type="evidence" value="ECO:0007669"/>
    <property type="project" value="InterPro"/>
</dbReference>
<dbReference type="GO" id="GO:0045893">
    <property type="term" value="P:positive regulation of DNA-templated transcription"/>
    <property type="evidence" value="ECO:0000314"/>
    <property type="project" value="MTBBASE"/>
</dbReference>
<dbReference type="GO" id="GO:0009408">
    <property type="term" value="P:response to heat"/>
    <property type="evidence" value="ECO:0000270"/>
    <property type="project" value="MTBBASE"/>
</dbReference>
<dbReference type="GO" id="GO:0001666">
    <property type="term" value="P:response to hypoxia"/>
    <property type="evidence" value="ECO:0000270"/>
    <property type="project" value="MTBBASE"/>
</dbReference>
<dbReference type="GO" id="GO:0009410">
    <property type="term" value="P:response to xenobiotic stimulus"/>
    <property type="evidence" value="ECO:0000270"/>
    <property type="project" value="MTBBASE"/>
</dbReference>
<dbReference type="CDD" id="cd06171">
    <property type="entry name" value="Sigma70_r4"/>
    <property type="match status" value="1"/>
</dbReference>
<dbReference type="FunFam" id="1.10.10.10:FF:000004">
    <property type="entry name" value="RNA polymerase sigma factor SigA"/>
    <property type="match status" value="1"/>
</dbReference>
<dbReference type="FunFam" id="1.10.601.10:FF:000001">
    <property type="entry name" value="RNA polymerase sigma factor SigA"/>
    <property type="match status" value="1"/>
</dbReference>
<dbReference type="Gene3D" id="1.10.601.10">
    <property type="entry name" value="RNA Polymerase Primary Sigma Factor"/>
    <property type="match status" value="2"/>
</dbReference>
<dbReference type="Gene3D" id="1.10.10.10">
    <property type="entry name" value="Winged helix-like DNA-binding domain superfamily/Winged helix DNA-binding domain"/>
    <property type="match status" value="2"/>
</dbReference>
<dbReference type="InterPro" id="IPR014284">
    <property type="entry name" value="RNA_pol_sigma-70_dom"/>
</dbReference>
<dbReference type="InterPro" id="IPR000943">
    <property type="entry name" value="RNA_pol_sigma70"/>
</dbReference>
<dbReference type="InterPro" id="IPR009042">
    <property type="entry name" value="RNA_pol_sigma70_r1_2"/>
</dbReference>
<dbReference type="InterPro" id="IPR007627">
    <property type="entry name" value="RNA_pol_sigma70_r2"/>
</dbReference>
<dbReference type="InterPro" id="IPR007624">
    <property type="entry name" value="RNA_pol_sigma70_r3"/>
</dbReference>
<dbReference type="InterPro" id="IPR007630">
    <property type="entry name" value="RNA_pol_sigma70_r4"/>
</dbReference>
<dbReference type="InterPro" id="IPR013325">
    <property type="entry name" value="RNA_pol_sigma_r2"/>
</dbReference>
<dbReference type="InterPro" id="IPR013324">
    <property type="entry name" value="RNA_pol_sigma_r3/r4-like"/>
</dbReference>
<dbReference type="InterPro" id="IPR050239">
    <property type="entry name" value="Sigma-70_RNA_pol_init_factors"/>
</dbReference>
<dbReference type="InterPro" id="IPR036388">
    <property type="entry name" value="WH-like_DNA-bd_sf"/>
</dbReference>
<dbReference type="NCBIfam" id="NF005920">
    <property type="entry name" value="PRK07921.1"/>
    <property type="match status" value="1"/>
</dbReference>
<dbReference type="NCBIfam" id="TIGR02937">
    <property type="entry name" value="sigma70-ECF"/>
    <property type="match status" value="1"/>
</dbReference>
<dbReference type="PANTHER" id="PTHR30603">
    <property type="entry name" value="RNA POLYMERASE SIGMA FACTOR RPO"/>
    <property type="match status" value="1"/>
</dbReference>
<dbReference type="PANTHER" id="PTHR30603:SF60">
    <property type="entry name" value="RNA POLYMERASE SIGMA FACTOR RPOD"/>
    <property type="match status" value="1"/>
</dbReference>
<dbReference type="Pfam" id="PF00140">
    <property type="entry name" value="Sigma70_r1_2"/>
    <property type="match status" value="1"/>
</dbReference>
<dbReference type="Pfam" id="PF04542">
    <property type="entry name" value="Sigma70_r2"/>
    <property type="match status" value="1"/>
</dbReference>
<dbReference type="Pfam" id="PF04539">
    <property type="entry name" value="Sigma70_r3"/>
    <property type="match status" value="1"/>
</dbReference>
<dbReference type="Pfam" id="PF04545">
    <property type="entry name" value="Sigma70_r4"/>
    <property type="match status" value="1"/>
</dbReference>
<dbReference type="PRINTS" id="PR00046">
    <property type="entry name" value="SIGMA70FCT"/>
</dbReference>
<dbReference type="SUPFAM" id="SSF88946">
    <property type="entry name" value="Sigma2 domain of RNA polymerase sigma factors"/>
    <property type="match status" value="1"/>
</dbReference>
<dbReference type="SUPFAM" id="SSF88659">
    <property type="entry name" value="Sigma3 and sigma4 domains of RNA polymerase sigma factors"/>
    <property type="match status" value="2"/>
</dbReference>
<dbReference type="PROSITE" id="PS00715">
    <property type="entry name" value="SIGMA70_1"/>
    <property type="match status" value="1"/>
</dbReference>
<dbReference type="PROSITE" id="PS00716">
    <property type="entry name" value="SIGMA70_2"/>
    <property type="match status" value="1"/>
</dbReference>
<proteinExistence type="evidence at protein level"/>
<comment type="function">
    <text evidence="8">Sigma factors are initiation factors that promote the attachment of RNA polymerase to specific initiation sites and are then released. A non-essential principal sigma factor that responds to cell envelope stress and hypoxia. Controls a regulon of about 40 genes, with another 100 genes expression being altered during SDS stress and about 50 gene being altered during diamide (oxidative) stress.</text>
</comment>
<comment type="subunit">
    <text evidence="1 9 10 12">Monomer (Probable). Interacts transiently with the RNA polymerase catalytic core formed by RpoA, RpoB, RpoC and RpoZ (2 alpha, 1 beta, 1 beta' and 1 omega subunit) to form the RNA polymerase holoenzyme that can initiate transcription (By similarity). Interacts with RbpA, probably 1:1.</text>
</comment>
<comment type="induction">
    <text evidence="3 4 5 6 7 11">Expressed in exponential phase, peaks at 10 days and decreases after up to 50 days in culture; induced by detergent (11-fold), heat shock (23-fold, 45 degrees Celsius), low aeration (2.5-fold) and oxidative stress (2.7-fold, SigE and SigH responsive). Seen to be induced (PubMed:9882660) and slightly repressed (PubMed:10027986) by 10 mM H(2)O(2). 2- to 6-fold induced by starvation. Its basal expression is largely under control of SigE, probably via MrpAB, although other factors including SigH also play a role. Half-life of about 2 minutes.</text>
</comment>
<comment type="domain">
    <text evidence="1">The sigma-70 factor domain-2 mediates sequence-specific interaction with the -10 element in promoter DNA, and plays an important role in melting the double-stranded DNA and the formation of the transcription bubble. The sigma-70 factor domain-2 mediates interaction with the RNA polymerase subunits RpoB and RpoC (By similarity).</text>
</comment>
<comment type="domain">
    <text evidence="1">The sigma-70 factor domain-4 contains a helix-turn-helix (H-T-H) motif that mediates interaction with the -35 element in promoter DNA. The domain also mediates interaction with the RNA polymerase subunit RpoA (By similarity).</text>
</comment>
<comment type="disruption phenotype">
    <text evidence="8">More sensitive to SDS (cell envelope stress) and hypoxic treatment in vitro. No effect in human THP-1 macrophage-like cells, intravenously inoculated BALB/c mice or aerosol-infected Hartley strain guinea pigs.</text>
</comment>
<comment type="similarity">
    <text evidence="12">Belongs to the sigma-70 factor family.</text>
</comment>
<keyword id="KW-0002">3D-structure</keyword>
<keyword id="KW-0238">DNA-binding</keyword>
<keyword id="KW-1185">Reference proteome</keyword>
<keyword id="KW-0731">Sigma factor</keyword>
<keyword id="KW-0346">Stress response</keyword>
<keyword id="KW-0804">Transcription</keyword>
<keyword id="KW-0805">Transcription regulation</keyword>
<gene>
    <name type="primary">sigB</name>
    <name type="synonym">mysB</name>
    <name type="ordered locus">Rv2710</name>
</gene>
<organism>
    <name type="scientific">Mycobacterium tuberculosis (strain ATCC 25618 / H37Rv)</name>
    <dbReference type="NCBI Taxonomy" id="83332"/>
    <lineage>
        <taxon>Bacteria</taxon>
        <taxon>Bacillati</taxon>
        <taxon>Actinomycetota</taxon>
        <taxon>Actinomycetes</taxon>
        <taxon>Mycobacteriales</taxon>
        <taxon>Mycobacteriaceae</taxon>
        <taxon>Mycobacterium</taxon>
        <taxon>Mycobacterium tuberculosis complex</taxon>
    </lineage>
</organism>
<feature type="chain" id="PRO_0000423644" description="RNA polymerase sigma factor SigB">
    <location>
        <begin position="1"/>
        <end position="323"/>
    </location>
</feature>
<feature type="DNA-binding region" description="H-T-H motif" evidence="1">
    <location>
        <begin position="284"/>
        <end position="303"/>
    </location>
</feature>
<feature type="region of interest" description="Sufficient to interact with RbpA">
    <location>
        <begin position="1"/>
        <end position="228"/>
    </location>
</feature>
<feature type="region of interest" description="Sigma-70 factor domain-1">
    <location>
        <begin position="25"/>
        <end position="59"/>
    </location>
</feature>
<feature type="region of interest" description="Sigma-70 factor domain-2">
    <location>
        <begin position="90"/>
        <end position="160"/>
    </location>
</feature>
<feature type="region of interest" description="Sigma-70 factor domain-3">
    <location>
        <begin position="169"/>
        <end position="245"/>
    </location>
</feature>
<feature type="region of interest" description="Sigma-70 factor domain-4">
    <location>
        <begin position="258"/>
        <end position="311"/>
    </location>
</feature>
<feature type="short sequence motif" description="Polymerase core binding" evidence="2">
    <location>
        <begin position="114"/>
        <end position="117"/>
    </location>
</feature>
<evidence type="ECO:0000250" key="1"/>
<evidence type="ECO:0000255" key="2"/>
<evidence type="ECO:0000269" key="3">
    <source>
    </source>
</evidence>
<evidence type="ECO:0000269" key="4">
    <source>
    </source>
</evidence>
<evidence type="ECO:0000269" key="5">
    <source>
    </source>
</evidence>
<evidence type="ECO:0000269" key="6">
    <source>
    </source>
</evidence>
<evidence type="ECO:0000269" key="7">
    <source>
    </source>
</evidence>
<evidence type="ECO:0000269" key="8">
    <source>
    </source>
</evidence>
<evidence type="ECO:0000269" key="9">
    <source>
    </source>
</evidence>
<evidence type="ECO:0000269" key="10">
    <source>
    </source>
</evidence>
<evidence type="ECO:0000269" key="11">
    <source>
    </source>
</evidence>
<evidence type="ECO:0000305" key="12"/>